<sequence length="179" mass="20441">MSRDRDRARPDTRLSSSDNESDDEDYQLPHSHPEYGSDSSDQDFELNNVGKFCPLPWKPDVARLCADTNKLFRCFIRCRLNSGPFHDALRRALFDIHMIGRMGYRLKQAEWETIMNLTPRQSLHLRRTLRDADSRSAHPISDIYASDSIFHPIAASSGTISSDCDVKGMNDLSVDSKLH</sequence>
<accession>Q77MP9</accession>
<keyword id="KW-0244">Early protein</keyword>
<keyword id="KW-1185">Reference proteome</keyword>
<name>ICP22_GAHVM</name>
<proteinExistence type="inferred from homology"/>
<reference key="1">
    <citation type="journal article" date="2000" name="J. Virol.">
        <title>The genome of a very virulent Marek's disease virus.</title>
        <authorList>
            <person name="Tulman E.R."/>
            <person name="Afonso C.L."/>
            <person name="Lu Z."/>
            <person name="Zsak L."/>
            <person name="Rock D.L."/>
            <person name="Kutish G.F."/>
        </authorList>
    </citation>
    <scope>NUCLEOTIDE SEQUENCE [LARGE SCALE GENOMIC DNA]</scope>
</reference>
<dbReference type="EMBL" id="AF243438">
    <property type="protein sequence ID" value="AAG14262.1"/>
    <property type="molecule type" value="Genomic_DNA"/>
</dbReference>
<dbReference type="RefSeq" id="YP_001034005.1">
    <property type="nucleotide sequence ID" value="NC_002229.3"/>
</dbReference>
<dbReference type="GeneID" id="4811543"/>
<dbReference type="KEGG" id="vg:4811543"/>
<dbReference type="Proteomes" id="UP000008072">
    <property type="component" value="Segment"/>
</dbReference>
<dbReference type="GO" id="GO:0010468">
    <property type="term" value="P:regulation of gene expression"/>
    <property type="evidence" value="ECO:0007669"/>
    <property type="project" value="InterPro"/>
</dbReference>
<dbReference type="InterPro" id="IPR003403">
    <property type="entry name" value="IE68"/>
</dbReference>
<dbReference type="Pfam" id="PF02479">
    <property type="entry name" value="Herpes_IE68"/>
    <property type="match status" value="1"/>
</dbReference>
<evidence type="ECO:0000256" key="1">
    <source>
        <dbReference type="SAM" id="MobiDB-lite"/>
    </source>
</evidence>
<evidence type="ECO:0000305" key="2"/>
<gene>
    <name type="primary">MDV088</name>
</gene>
<organism>
    <name type="scientific">Gallid herpesvirus 2 (strain Chicken/Md5/ATCC VR-987)</name>
    <name type="common">GaHV-2</name>
    <name type="synonym">Marek's disease herpesvirus type 1</name>
    <dbReference type="NCBI Taxonomy" id="10389"/>
    <lineage>
        <taxon>Viruses</taxon>
        <taxon>Duplodnaviria</taxon>
        <taxon>Heunggongvirae</taxon>
        <taxon>Peploviricota</taxon>
        <taxon>Herviviricetes</taxon>
        <taxon>Herpesvirales</taxon>
        <taxon>Orthoherpesviridae</taxon>
        <taxon>Alphaherpesvirinae</taxon>
        <taxon>Mardivirus</taxon>
        <taxon>Mardivirus gallidalpha2</taxon>
        <taxon>Gallid alphaherpesvirus 2</taxon>
    </lineage>
</organism>
<feature type="chain" id="PRO_0000406542" description="Transcriptional regulator ICP22 homolog">
    <location>
        <begin position="1"/>
        <end position="179"/>
    </location>
</feature>
<feature type="region of interest" description="Disordered" evidence="1">
    <location>
        <begin position="1"/>
        <end position="40"/>
    </location>
</feature>
<feature type="compositionally biased region" description="Basic and acidic residues" evidence="1">
    <location>
        <begin position="1"/>
        <end position="12"/>
    </location>
</feature>
<comment type="similarity">
    <text evidence="2">Belongs to the herpesviridae ICP22 family.</text>
</comment>
<protein>
    <recommendedName>
        <fullName>Transcriptional regulator ICP22 homolog</fullName>
    </recommendedName>
    <alternativeName>
        <fullName>Immediate early ICP22-like protein</fullName>
    </alternativeName>
</protein>
<organismHost>
    <name type="scientific">Gallus gallus</name>
    <name type="common">Chicken</name>
    <dbReference type="NCBI Taxonomy" id="9031"/>
</organismHost>